<dbReference type="EC" id="7.1.1.-" evidence="1"/>
<dbReference type="EMBL" id="CP000151">
    <property type="protein sequence ID" value="ABB09161.1"/>
    <property type="molecule type" value="Genomic_DNA"/>
</dbReference>
<dbReference type="RefSeq" id="WP_006478272.1">
    <property type="nucleotide sequence ID" value="NZ_WNDV01000048.1"/>
</dbReference>
<dbReference type="SMR" id="Q39EF5"/>
<dbReference type="GeneID" id="93191319"/>
<dbReference type="KEGG" id="bur:Bcep18194_A5567"/>
<dbReference type="HOGENOM" id="CLU_144724_2_0_4"/>
<dbReference type="Proteomes" id="UP000002705">
    <property type="component" value="Chromosome 1"/>
</dbReference>
<dbReference type="GO" id="GO:0030964">
    <property type="term" value="C:NADH dehydrogenase complex"/>
    <property type="evidence" value="ECO:0007669"/>
    <property type="project" value="TreeGrafter"/>
</dbReference>
<dbReference type="GO" id="GO:0005886">
    <property type="term" value="C:plasma membrane"/>
    <property type="evidence" value="ECO:0007669"/>
    <property type="project" value="UniProtKB-SubCell"/>
</dbReference>
<dbReference type="GO" id="GO:0050136">
    <property type="term" value="F:NADH:ubiquinone reductase (non-electrogenic) activity"/>
    <property type="evidence" value="ECO:0007669"/>
    <property type="project" value="UniProtKB-UniRule"/>
</dbReference>
<dbReference type="GO" id="GO:0048038">
    <property type="term" value="F:quinone binding"/>
    <property type="evidence" value="ECO:0007669"/>
    <property type="project" value="UniProtKB-KW"/>
</dbReference>
<dbReference type="GO" id="GO:0042773">
    <property type="term" value="P:ATP synthesis coupled electron transport"/>
    <property type="evidence" value="ECO:0007669"/>
    <property type="project" value="InterPro"/>
</dbReference>
<dbReference type="FunFam" id="1.10.287.3510:FF:000001">
    <property type="entry name" value="NADH-quinone oxidoreductase subunit K"/>
    <property type="match status" value="1"/>
</dbReference>
<dbReference type="Gene3D" id="1.10.287.3510">
    <property type="match status" value="1"/>
</dbReference>
<dbReference type="HAMAP" id="MF_01456">
    <property type="entry name" value="NDH1_NuoK"/>
    <property type="match status" value="1"/>
</dbReference>
<dbReference type="InterPro" id="IPR001133">
    <property type="entry name" value="NADH_UbQ_OxRdtase_chain4L/K"/>
</dbReference>
<dbReference type="InterPro" id="IPR039428">
    <property type="entry name" value="NUOK/Mnh_C1-like"/>
</dbReference>
<dbReference type="NCBIfam" id="NF004320">
    <property type="entry name" value="PRK05715.1-2"/>
    <property type="match status" value="1"/>
</dbReference>
<dbReference type="NCBIfam" id="NF004321">
    <property type="entry name" value="PRK05715.1-3"/>
    <property type="match status" value="1"/>
</dbReference>
<dbReference type="NCBIfam" id="NF004323">
    <property type="entry name" value="PRK05715.1-5"/>
    <property type="match status" value="1"/>
</dbReference>
<dbReference type="PANTHER" id="PTHR11434:SF21">
    <property type="entry name" value="NADH DEHYDROGENASE SUBUNIT 4L-RELATED"/>
    <property type="match status" value="1"/>
</dbReference>
<dbReference type="PANTHER" id="PTHR11434">
    <property type="entry name" value="NADH-UBIQUINONE OXIDOREDUCTASE SUBUNIT ND4L"/>
    <property type="match status" value="1"/>
</dbReference>
<dbReference type="Pfam" id="PF00420">
    <property type="entry name" value="Oxidored_q2"/>
    <property type="match status" value="1"/>
</dbReference>
<keyword id="KW-0997">Cell inner membrane</keyword>
<keyword id="KW-1003">Cell membrane</keyword>
<keyword id="KW-0472">Membrane</keyword>
<keyword id="KW-0520">NAD</keyword>
<keyword id="KW-0874">Quinone</keyword>
<keyword id="KW-1278">Translocase</keyword>
<keyword id="KW-0812">Transmembrane</keyword>
<keyword id="KW-1133">Transmembrane helix</keyword>
<keyword id="KW-0813">Transport</keyword>
<keyword id="KW-0830">Ubiquinone</keyword>
<evidence type="ECO:0000255" key="1">
    <source>
        <dbReference type="HAMAP-Rule" id="MF_01456"/>
    </source>
</evidence>
<protein>
    <recommendedName>
        <fullName evidence="1">NADH-quinone oxidoreductase subunit K</fullName>
        <ecNumber evidence="1">7.1.1.-</ecNumber>
    </recommendedName>
    <alternativeName>
        <fullName evidence="1">NADH dehydrogenase I subunit K</fullName>
    </alternativeName>
    <alternativeName>
        <fullName evidence="1">NDH-1 subunit K</fullName>
    </alternativeName>
</protein>
<gene>
    <name evidence="1" type="primary">nuoK</name>
    <name type="ordered locus">Bcep18194_A5567</name>
</gene>
<comment type="function">
    <text evidence="1">NDH-1 shuttles electrons from NADH, via FMN and iron-sulfur (Fe-S) centers, to quinones in the respiratory chain. The immediate electron acceptor for the enzyme in this species is believed to be ubiquinone. Couples the redox reaction to proton translocation (for every two electrons transferred, four hydrogen ions are translocated across the cytoplasmic membrane), and thus conserves the redox energy in a proton gradient.</text>
</comment>
<comment type="catalytic activity">
    <reaction evidence="1">
        <text>a quinone + NADH + 5 H(+)(in) = a quinol + NAD(+) + 4 H(+)(out)</text>
        <dbReference type="Rhea" id="RHEA:57888"/>
        <dbReference type="ChEBI" id="CHEBI:15378"/>
        <dbReference type="ChEBI" id="CHEBI:24646"/>
        <dbReference type="ChEBI" id="CHEBI:57540"/>
        <dbReference type="ChEBI" id="CHEBI:57945"/>
        <dbReference type="ChEBI" id="CHEBI:132124"/>
    </reaction>
</comment>
<comment type="subunit">
    <text evidence="1">NDH-1 is composed of 14 different subunits. Subunits NuoA, H, J, K, L, M, N constitute the membrane sector of the complex.</text>
</comment>
<comment type="subcellular location">
    <subcellularLocation>
        <location evidence="1">Cell inner membrane</location>
        <topology evidence="1">Multi-pass membrane protein</topology>
    </subcellularLocation>
</comment>
<comment type="similarity">
    <text evidence="1">Belongs to the complex I subunit 4L family.</text>
</comment>
<reference key="1">
    <citation type="submission" date="2005-10" db="EMBL/GenBank/DDBJ databases">
        <title>Complete sequence of chromosome 1 of Burkholderia sp. 383.</title>
        <authorList>
            <consortium name="US DOE Joint Genome Institute"/>
            <person name="Copeland A."/>
            <person name="Lucas S."/>
            <person name="Lapidus A."/>
            <person name="Barry K."/>
            <person name="Detter J.C."/>
            <person name="Glavina T."/>
            <person name="Hammon N."/>
            <person name="Israni S."/>
            <person name="Pitluck S."/>
            <person name="Chain P."/>
            <person name="Malfatti S."/>
            <person name="Shin M."/>
            <person name="Vergez L."/>
            <person name="Schmutz J."/>
            <person name="Larimer F."/>
            <person name="Land M."/>
            <person name="Kyrpides N."/>
            <person name="Lykidis A."/>
            <person name="Richardson P."/>
        </authorList>
    </citation>
    <scope>NUCLEOTIDE SEQUENCE [LARGE SCALE GENOMIC DNA]</scope>
    <source>
        <strain>ATCC 17760 / DSM 23089 / LMG 22485 / NCIMB 9086 / R18194 / 383</strain>
    </source>
</reference>
<accession>Q39EF5</accession>
<feature type="chain" id="PRO_0000389999" description="NADH-quinone oxidoreductase subunit K">
    <location>
        <begin position="1"/>
        <end position="101"/>
    </location>
</feature>
<feature type="transmembrane region" description="Helical" evidence="1">
    <location>
        <begin position="4"/>
        <end position="24"/>
    </location>
</feature>
<feature type="transmembrane region" description="Helical" evidence="1">
    <location>
        <begin position="30"/>
        <end position="50"/>
    </location>
</feature>
<feature type="transmembrane region" description="Helical" evidence="1">
    <location>
        <begin position="61"/>
        <end position="81"/>
    </location>
</feature>
<proteinExistence type="inferred from homology"/>
<name>NUOK_BURL3</name>
<sequence>MLTLAHYLVLGAILFAIAIVGIFLNRRNVIIILMSIELMLLAVNTNFVAFSHYLGDVHGQIFVFFVLTVAAAEAAIGLAILVTLFRKLDTINVEDLDQLKG</sequence>
<organism>
    <name type="scientific">Burkholderia lata (strain ATCC 17760 / DSM 23089 / LMG 22485 / NCIMB 9086 / R18194 / 383)</name>
    <dbReference type="NCBI Taxonomy" id="482957"/>
    <lineage>
        <taxon>Bacteria</taxon>
        <taxon>Pseudomonadati</taxon>
        <taxon>Pseudomonadota</taxon>
        <taxon>Betaproteobacteria</taxon>
        <taxon>Burkholderiales</taxon>
        <taxon>Burkholderiaceae</taxon>
        <taxon>Burkholderia</taxon>
        <taxon>Burkholderia cepacia complex</taxon>
    </lineage>
</organism>